<protein>
    <recommendedName>
        <fullName>Probable G-protein coupled receptor 34</fullName>
    </recommendedName>
</protein>
<feature type="chain" id="PRO_0000069558" description="Probable G-protein coupled receptor 34">
    <location>
        <begin position="1"/>
        <end position="381"/>
    </location>
</feature>
<feature type="topological domain" description="Extracellular" evidence="3">
    <location>
        <begin position="1"/>
        <end position="61"/>
    </location>
</feature>
<feature type="transmembrane region" description="Helical; Name=1" evidence="3">
    <location>
        <begin position="62"/>
        <end position="82"/>
    </location>
</feature>
<feature type="topological domain" description="Cytoplasmic" evidence="3">
    <location>
        <begin position="83"/>
        <end position="88"/>
    </location>
</feature>
<feature type="transmembrane region" description="Helical; Name=2" evidence="3">
    <location>
        <begin position="89"/>
        <end position="109"/>
    </location>
</feature>
<feature type="topological domain" description="Extracellular" evidence="3">
    <location>
        <begin position="110"/>
        <end position="128"/>
    </location>
</feature>
<feature type="transmembrane region" description="Helical; Name=3" evidence="3">
    <location>
        <begin position="129"/>
        <end position="149"/>
    </location>
</feature>
<feature type="topological domain" description="Cytoplasmic" evidence="3">
    <location>
        <begin position="150"/>
        <end position="171"/>
    </location>
</feature>
<feature type="transmembrane region" description="Helical; Name=4" evidence="3">
    <location>
        <begin position="172"/>
        <end position="192"/>
    </location>
</feature>
<feature type="topological domain" description="Extracellular" evidence="3">
    <location>
        <begin position="193"/>
        <end position="216"/>
    </location>
</feature>
<feature type="transmembrane region" description="Helical; Name=5" evidence="3">
    <location>
        <begin position="217"/>
        <end position="237"/>
    </location>
</feature>
<feature type="topological domain" description="Cytoplasmic" evidence="3">
    <location>
        <begin position="238"/>
        <end position="269"/>
    </location>
</feature>
<feature type="transmembrane region" description="Helical; Name=6" evidence="3">
    <location>
        <begin position="270"/>
        <end position="290"/>
    </location>
</feature>
<feature type="topological domain" description="Extracellular" evidence="3">
    <location>
        <begin position="291"/>
        <end position="310"/>
    </location>
</feature>
<feature type="transmembrane region" description="Helical; Name=7" evidence="3">
    <location>
        <begin position="311"/>
        <end position="331"/>
    </location>
</feature>
<feature type="topological domain" description="Cytoplasmic" evidence="3">
    <location>
        <begin position="332"/>
        <end position="381"/>
    </location>
</feature>
<feature type="glycosylation site" description="N-linked (GlcNAc...) asparagine" evidence="3">
    <location>
        <position position="28"/>
    </location>
</feature>
<feature type="glycosylation site" description="N-linked (GlcNAc...) asparagine" evidence="3">
    <location>
        <position position="36"/>
    </location>
</feature>
<feature type="glycosylation site" description="N-linked (GlcNAc...) asparagine" evidence="3">
    <location>
        <position position="42"/>
    </location>
</feature>
<feature type="glycosylation site" description="N-linked (GlcNAc...) asparagine" evidence="3">
    <location>
        <position position="200"/>
    </location>
</feature>
<feature type="glycosylation site" description="N-linked (GlcNAc...) asparagine" evidence="3">
    <location>
        <position position="295"/>
    </location>
</feature>
<feature type="disulfide bond" evidence="4">
    <location>
        <begin position="127"/>
        <end position="204"/>
    </location>
</feature>
<sequence length="381" mass="43860">MRSHTITMTTTSVSSWPYSSHRMRFITNHSDQPPQNFSATPNVTTCPMDEKLLSTVLTTSYSVIFIVGLVGNIIALYVFLGIHRKRNSIQIYLLNVAIADLLLIFCLPFRIMYHINQNKWTLGVILCKVVGTLFYMNMYISIILLGFISLDRYIKINRSIQQRKAITTKQSIYVCCIVWMLALGGFLTMIILTLKKGGHNSTMCFHYRDKHNAKGEAIFNFILVVMFWLIFLLIILSYIKIGKNLLRISKRRSKFPNSGKYATTARNSFIVLIIFTICFVPYHAFRFIYISSQLNVSSCYWKEIVHKTNEIMLVLSSFNSCLDPVMYFLMSSNIRKIMCQLLFRRFQGEPSRSESTSEFKPGYSLHDTSVAVKIQSSSKST</sequence>
<keyword id="KW-1003">Cell membrane</keyword>
<keyword id="KW-1015">Disulfide bond</keyword>
<keyword id="KW-0297">G-protein coupled receptor</keyword>
<keyword id="KW-0325">Glycoprotein</keyword>
<keyword id="KW-0472">Membrane</keyword>
<keyword id="KW-0675">Receptor</keyword>
<keyword id="KW-1185">Reference proteome</keyword>
<keyword id="KW-0807">Transducer</keyword>
<keyword id="KW-0812">Transmembrane</keyword>
<keyword id="KW-1133">Transmembrane helix</keyword>
<accession>Q6XCF2</accession>
<evidence type="ECO:0000250" key="1">
    <source>
        <dbReference type="UniProtKB" id="Q9R1K6"/>
    </source>
</evidence>
<evidence type="ECO:0000250" key="2">
    <source>
        <dbReference type="UniProtKB" id="Q9UPC5"/>
    </source>
</evidence>
<evidence type="ECO:0000255" key="3"/>
<evidence type="ECO:0000255" key="4">
    <source>
        <dbReference type="PROSITE-ProRule" id="PRU00521"/>
    </source>
</evidence>
<comment type="function">
    <text evidence="1 2">G-protein-coupled receptor of lysophosphatidylserine (LysoPS) that plays different roles in immune response (By similarity). Acts a damage-sensing receptor that triggers tissue repair upon recognition of dying neutrophils (By similarity). Mechanistically, apoptotic neutrophils release lysophosphatydilserine that are recognized by type 3 innate lymphoid cells (ILC3s) via GPR34, which activates downstream PI3K-AKT and RAS-ERK signaling pathways leading to STAT3 activation and IL-22 production (By similarity). Plays an important role in microglial function, controlling morphology and phagocytosis (By similarity).</text>
</comment>
<comment type="subcellular location">
    <subcellularLocation>
        <location evidence="2">Cell membrane</location>
        <topology evidence="2">Multi-pass membrane protein</topology>
    </subcellularLocation>
</comment>
<comment type="similarity">
    <text evidence="4">Belongs to the G-protein coupled receptor 1 family.</text>
</comment>
<reference key="1">
    <citation type="journal article" date="2003" name="J. Biol. Chem.">
        <title>The structural evolution of a P2Y-like G-protein-coupled receptor.</title>
        <authorList>
            <person name="Schulz A."/>
            <person name="Schoneberg T."/>
        </authorList>
    </citation>
    <scope>NUCLEOTIDE SEQUENCE [GENOMIC DNA]</scope>
</reference>
<gene>
    <name type="primary">GPR34</name>
</gene>
<proteinExistence type="inferred from homology"/>
<organism>
    <name type="scientific">Gorilla gorilla gorilla</name>
    <name type="common">Western lowland gorilla</name>
    <dbReference type="NCBI Taxonomy" id="9595"/>
    <lineage>
        <taxon>Eukaryota</taxon>
        <taxon>Metazoa</taxon>
        <taxon>Chordata</taxon>
        <taxon>Craniata</taxon>
        <taxon>Vertebrata</taxon>
        <taxon>Euteleostomi</taxon>
        <taxon>Mammalia</taxon>
        <taxon>Eutheria</taxon>
        <taxon>Euarchontoglires</taxon>
        <taxon>Primates</taxon>
        <taxon>Haplorrhini</taxon>
        <taxon>Catarrhini</taxon>
        <taxon>Hominidae</taxon>
        <taxon>Gorilla</taxon>
    </lineage>
</organism>
<dbReference type="EMBL" id="AY241078">
    <property type="protein sequence ID" value="AAP04287.1"/>
    <property type="molecule type" value="Genomic_DNA"/>
</dbReference>
<dbReference type="RefSeq" id="XP_030861632.1">
    <property type="nucleotide sequence ID" value="XM_031005772.3"/>
</dbReference>
<dbReference type="RefSeq" id="XP_030861633.1">
    <property type="nucleotide sequence ID" value="XM_031005773.3"/>
</dbReference>
<dbReference type="RefSeq" id="XP_055232418.1">
    <property type="nucleotide sequence ID" value="XM_055376443.2"/>
</dbReference>
<dbReference type="RefSeq" id="XP_055232419.1">
    <property type="nucleotide sequence ID" value="XM_055376444.2"/>
</dbReference>
<dbReference type="SMR" id="Q6XCF2"/>
<dbReference type="FunCoup" id="Q6XCF2">
    <property type="interactions" value="265"/>
</dbReference>
<dbReference type="GlyCosmos" id="Q6XCF2">
    <property type="glycosylation" value="5 sites, No reported glycans"/>
</dbReference>
<dbReference type="GeneID" id="115932139"/>
<dbReference type="InParanoid" id="Q6XCF2"/>
<dbReference type="Proteomes" id="UP000001519">
    <property type="component" value="Unplaced"/>
</dbReference>
<dbReference type="GO" id="GO:0005886">
    <property type="term" value="C:plasma membrane"/>
    <property type="evidence" value="ECO:0007669"/>
    <property type="project" value="UniProtKB-SubCell"/>
</dbReference>
<dbReference type="GO" id="GO:0045028">
    <property type="term" value="F:G protein-coupled purinergic nucleotide receptor activity"/>
    <property type="evidence" value="ECO:0000318"/>
    <property type="project" value="GO_Central"/>
</dbReference>
<dbReference type="GO" id="GO:0007186">
    <property type="term" value="P:G protein-coupled receptor signaling pathway"/>
    <property type="evidence" value="ECO:0000318"/>
    <property type="project" value="GO_Central"/>
</dbReference>
<dbReference type="CDD" id="cd15148">
    <property type="entry name" value="7tmA_GPR34-like"/>
    <property type="match status" value="1"/>
</dbReference>
<dbReference type="FunFam" id="1.20.1070.10:FF:000150">
    <property type="entry name" value="probable G-protein coupled receptor 34"/>
    <property type="match status" value="1"/>
</dbReference>
<dbReference type="Gene3D" id="1.20.1070.10">
    <property type="entry name" value="Rhodopsin 7-helix transmembrane proteins"/>
    <property type="match status" value="1"/>
</dbReference>
<dbReference type="InterPro" id="IPR000276">
    <property type="entry name" value="GPCR_Rhodpsn"/>
</dbReference>
<dbReference type="InterPro" id="IPR017452">
    <property type="entry name" value="GPCR_Rhodpsn_7TM"/>
</dbReference>
<dbReference type="InterPro" id="IPR048057">
    <property type="entry name" value="GPR34_7tmA"/>
</dbReference>
<dbReference type="PANTHER" id="PTHR24233:SF1">
    <property type="entry name" value="G-PROTEIN COUPLED RECEPTOR 34-RELATED"/>
    <property type="match status" value="1"/>
</dbReference>
<dbReference type="PANTHER" id="PTHR24233">
    <property type="entry name" value="P2Y PURINOCEPTOR-RELATED G-PROTEIN COUPLED RECEPTOR"/>
    <property type="match status" value="1"/>
</dbReference>
<dbReference type="Pfam" id="PF00001">
    <property type="entry name" value="7tm_1"/>
    <property type="match status" value="1"/>
</dbReference>
<dbReference type="PRINTS" id="PR00237">
    <property type="entry name" value="GPCRRHODOPSN"/>
</dbReference>
<dbReference type="PRINTS" id="PR01157">
    <property type="entry name" value="P2YPURNOCPTR"/>
</dbReference>
<dbReference type="SUPFAM" id="SSF81321">
    <property type="entry name" value="Family A G protein-coupled receptor-like"/>
    <property type="match status" value="1"/>
</dbReference>
<dbReference type="PROSITE" id="PS00237">
    <property type="entry name" value="G_PROTEIN_RECEP_F1_1"/>
    <property type="match status" value="1"/>
</dbReference>
<dbReference type="PROSITE" id="PS50262">
    <property type="entry name" value="G_PROTEIN_RECEP_F1_2"/>
    <property type="match status" value="1"/>
</dbReference>
<name>GPR34_GORGO</name>